<name>ATP6_BACP2</name>
<feature type="chain" id="PRO_1000145259" description="ATP synthase subunit a">
    <location>
        <begin position="1"/>
        <end position="244"/>
    </location>
</feature>
<feature type="transmembrane region" description="Helical" evidence="1">
    <location>
        <begin position="17"/>
        <end position="37"/>
    </location>
</feature>
<feature type="transmembrane region" description="Helical" evidence="1">
    <location>
        <begin position="74"/>
        <end position="94"/>
    </location>
</feature>
<feature type="transmembrane region" description="Helical" evidence="1">
    <location>
        <begin position="112"/>
        <end position="132"/>
    </location>
</feature>
<feature type="transmembrane region" description="Helical" evidence="1">
    <location>
        <begin position="148"/>
        <end position="168"/>
    </location>
</feature>
<feature type="transmembrane region" description="Helical" evidence="1">
    <location>
        <begin position="171"/>
        <end position="191"/>
    </location>
</feature>
<feature type="transmembrane region" description="Helical" evidence="1">
    <location>
        <begin position="196"/>
        <end position="216"/>
    </location>
</feature>
<feature type="transmembrane region" description="Helical" evidence="1">
    <location>
        <begin position="217"/>
        <end position="237"/>
    </location>
</feature>
<proteinExistence type="inferred from homology"/>
<gene>
    <name evidence="1" type="primary">atpB</name>
    <name type="ordered locus">BPUM_3332</name>
</gene>
<keyword id="KW-0066">ATP synthesis</keyword>
<keyword id="KW-1003">Cell membrane</keyword>
<keyword id="KW-0138">CF(0)</keyword>
<keyword id="KW-0375">Hydrogen ion transport</keyword>
<keyword id="KW-0406">Ion transport</keyword>
<keyword id="KW-0472">Membrane</keyword>
<keyword id="KW-0812">Transmembrane</keyword>
<keyword id="KW-1133">Transmembrane helix</keyword>
<keyword id="KW-0813">Transport</keyword>
<comment type="function">
    <text evidence="1">Key component of the proton channel; it plays a direct role in the translocation of protons across the membrane.</text>
</comment>
<comment type="subunit">
    <text evidence="1">F-type ATPases have 2 components, CF(1) - the catalytic core - and CF(0) - the membrane proton channel. CF(1) has five subunits: alpha(3), beta(3), gamma(1), delta(1), epsilon(1). CF(0) has three main subunits: a(1), b(2) and c(9-12). The alpha and beta chains form an alternating ring which encloses part of the gamma chain. CF(1) is attached to CF(0) by a central stalk formed by the gamma and epsilon chains, while a peripheral stalk is formed by the delta and b chains.</text>
</comment>
<comment type="subcellular location">
    <subcellularLocation>
        <location evidence="1">Cell membrane</location>
        <topology evidence="1">Multi-pass membrane protein</topology>
    </subcellularLocation>
</comment>
<comment type="similarity">
    <text evidence="1">Belongs to the ATPase A chain family.</text>
</comment>
<evidence type="ECO:0000255" key="1">
    <source>
        <dbReference type="HAMAP-Rule" id="MF_01393"/>
    </source>
</evidence>
<protein>
    <recommendedName>
        <fullName evidence="1">ATP synthase subunit a</fullName>
    </recommendedName>
    <alternativeName>
        <fullName evidence="1">ATP synthase F0 sector subunit a</fullName>
    </alternativeName>
    <alternativeName>
        <fullName evidence="1">F-ATPase subunit 6</fullName>
    </alternativeName>
</protein>
<reference key="1">
    <citation type="journal article" date="2007" name="PLoS ONE">
        <title>Paradoxical DNA repair and peroxide resistance gene conservation in Bacillus pumilus SAFR-032.</title>
        <authorList>
            <person name="Gioia J."/>
            <person name="Yerrapragada S."/>
            <person name="Qin X."/>
            <person name="Jiang H."/>
            <person name="Igboeli O.C."/>
            <person name="Muzny D."/>
            <person name="Dugan-Rocha S."/>
            <person name="Ding Y."/>
            <person name="Hawes A."/>
            <person name="Liu W."/>
            <person name="Perez L."/>
            <person name="Kovar C."/>
            <person name="Dinh H."/>
            <person name="Lee S."/>
            <person name="Nazareth L."/>
            <person name="Blyth P."/>
            <person name="Holder M."/>
            <person name="Buhay C."/>
            <person name="Tirumalai M.R."/>
            <person name="Liu Y."/>
            <person name="Dasgupta I."/>
            <person name="Bokhetache L."/>
            <person name="Fujita M."/>
            <person name="Karouia F."/>
            <person name="Eswara Moorthy P."/>
            <person name="Siefert J."/>
            <person name="Uzman A."/>
            <person name="Buzumbo P."/>
            <person name="Verma A."/>
            <person name="Zwiya H."/>
            <person name="McWilliams B.D."/>
            <person name="Olowu A."/>
            <person name="Clinkenbeard K.D."/>
            <person name="Newcombe D."/>
            <person name="Golebiewski L."/>
            <person name="Petrosino J.F."/>
            <person name="Nicholson W.L."/>
            <person name="Fox G.E."/>
            <person name="Venkateswaran K."/>
            <person name="Highlander S.K."/>
            <person name="Weinstock G.M."/>
        </authorList>
    </citation>
    <scope>NUCLEOTIDE SEQUENCE [LARGE SCALE GENOMIC DNA]</scope>
    <source>
        <strain>SAFR-032</strain>
    </source>
</reference>
<organism>
    <name type="scientific">Bacillus pumilus (strain SAFR-032)</name>
    <dbReference type="NCBI Taxonomy" id="315750"/>
    <lineage>
        <taxon>Bacteria</taxon>
        <taxon>Bacillati</taxon>
        <taxon>Bacillota</taxon>
        <taxon>Bacilli</taxon>
        <taxon>Bacillales</taxon>
        <taxon>Bacillaceae</taxon>
        <taxon>Bacillus</taxon>
    </lineage>
</organism>
<sequence>MGHSSKTTEFLGLTFNLSNVLMITIASIIVLLIAVLTTRVLSIRPTKAQNFMEWIVDFVRNIIGSSMDMKTGAPFLALGVTLLMYIFVSNMLGLPFSISVDHNLWWKSPTADPAITMTLAVMVMGLTHYYGVKAKGVKEYTKDYFRPIPLLVPLKIIEEFANTLTLGLRLYGNIFAGEILLGLLAGLATNFYSQNIALGIIGTLGAIVPMIVWQAFSLFVGTIQAFIFTMLTMVYISHKVSDEH</sequence>
<dbReference type="EMBL" id="CP000813">
    <property type="protein sequence ID" value="ABV63985.1"/>
    <property type="molecule type" value="Genomic_DNA"/>
</dbReference>
<dbReference type="RefSeq" id="WP_012011551.1">
    <property type="nucleotide sequence ID" value="NZ_VEIS01000002.1"/>
</dbReference>
<dbReference type="SMR" id="A8FIB8"/>
<dbReference type="STRING" id="315750.BPUM_3332"/>
<dbReference type="GeneID" id="5622622"/>
<dbReference type="KEGG" id="bpu:BPUM_3332"/>
<dbReference type="eggNOG" id="COG0356">
    <property type="taxonomic scope" value="Bacteria"/>
</dbReference>
<dbReference type="HOGENOM" id="CLU_041018_2_3_9"/>
<dbReference type="OrthoDB" id="9789241at2"/>
<dbReference type="Proteomes" id="UP000001355">
    <property type="component" value="Chromosome"/>
</dbReference>
<dbReference type="GO" id="GO:0005886">
    <property type="term" value="C:plasma membrane"/>
    <property type="evidence" value="ECO:0007669"/>
    <property type="project" value="UniProtKB-SubCell"/>
</dbReference>
<dbReference type="GO" id="GO:0045259">
    <property type="term" value="C:proton-transporting ATP synthase complex"/>
    <property type="evidence" value="ECO:0007669"/>
    <property type="project" value="UniProtKB-KW"/>
</dbReference>
<dbReference type="GO" id="GO:0046933">
    <property type="term" value="F:proton-transporting ATP synthase activity, rotational mechanism"/>
    <property type="evidence" value="ECO:0007669"/>
    <property type="project" value="UniProtKB-UniRule"/>
</dbReference>
<dbReference type="GO" id="GO:0042777">
    <property type="term" value="P:proton motive force-driven plasma membrane ATP synthesis"/>
    <property type="evidence" value="ECO:0007669"/>
    <property type="project" value="TreeGrafter"/>
</dbReference>
<dbReference type="CDD" id="cd00310">
    <property type="entry name" value="ATP-synt_Fo_a_6"/>
    <property type="match status" value="1"/>
</dbReference>
<dbReference type="FunFam" id="1.20.120.220:FF:000005">
    <property type="entry name" value="ATP synthase subunit a"/>
    <property type="match status" value="1"/>
</dbReference>
<dbReference type="Gene3D" id="1.20.120.220">
    <property type="entry name" value="ATP synthase, F0 complex, subunit A"/>
    <property type="match status" value="1"/>
</dbReference>
<dbReference type="HAMAP" id="MF_01393">
    <property type="entry name" value="ATP_synth_a_bact"/>
    <property type="match status" value="1"/>
</dbReference>
<dbReference type="InterPro" id="IPR045082">
    <property type="entry name" value="ATP_syn_F0_a_bact/chloroplast"/>
</dbReference>
<dbReference type="InterPro" id="IPR000568">
    <property type="entry name" value="ATP_synth_F0_asu"/>
</dbReference>
<dbReference type="InterPro" id="IPR023011">
    <property type="entry name" value="ATP_synth_F0_asu_AS"/>
</dbReference>
<dbReference type="InterPro" id="IPR035908">
    <property type="entry name" value="F0_ATP_A_sf"/>
</dbReference>
<dbReference type="NCBIfam" id="TIGR01131">
    <property type="entry name" value="ATP_synt_6_or_A"/>
    <property type="match status" value="1"/>
</dbReference>
<dbReference type="NCBIfam" id="NF004479">
    <property type="entry name" value="PRK05815.1-4"/>
    <property type="match status" value="1"/>
</dbReference>
<dbReference type="PANTHER" id="PTHR42823">
    <property type="entry name" value="ATP SYNTHASE SUBUNIT A, CHLOROPLASTIC"/>
    <property type="match status" value="1"/>
</dbReference>
<dbReference type="PANTHER" id="PTHR42823:SF3">
    <property type="entry name" value="ATP SYNTHASE SUBUNIT A, CHLOROPLASTIC"/>
    <property type="match status" value="1"/>
</dbReference>
<dbReference type="Pfam" id="PF00119">
    <property type="entry name" value="ATP-synt_A"/>
    <property type="match status" value="1"/>
</dbReference>
<dbReference type="PRINTS" id="PR00123">
    <property type="entry name" value="ATPASEA"/>
</dbReference>
<dbReference type="SUPFAM" id="SSF81336">
    <property type="entry name" value="F1F0 ATP synthase subunit A"/>
    <property type="match status" value="1"/>
</dbReference>
<dbReference type="PROSITE" id="PS00449">
    <property type="entry name" value="ATPASE_A"/>
    <property type="match status" value="1"/>
</dbReference>
<accession>A8FIB8</accession>